<feature type="chain" id="PRO_1000214970" description="Large ribosomal subunit protein uL14">
    <location>
        <begin position="1"/>
        <end position="122"/>
    </location>
</feature>
<name>RL14_CORK4</name>
<organism>
    <name type="scientific">Corynebacterium kroppenstedtii (strain DSM 44385 / JCM 11950 / CIP 105744 / CCUG 35717)</name>
    <dbReference type="NCBI Taxonomy" id="645127"/>
    <lineage>
        <taxon>Bacteria</taxon>
        <taxon>Bacillati</taxon>
        <taxon>Actinomycetota</taxon>
        <taxon>Actinomycetes</taxon>
        <taxon>Mycobacteriales</taxon>
        <taxon>Corynebacteriaceae</taxon>
        <taxon>Corynebacterium</taxon>
    </lineage>
</organism>
<proteinExistence type="inferred from homology"/>
<reference key="1">
    <citation type="journal article" date="2008" name="J. Biotechnol.">
        <title>Ultrafast pyrosequencing of Corynebacterium kroppenstedtii DSM44385 revealed insights into the physiology of a lipophilic corynebacterium that lacks mycolic acids.</title>
        <authorList>
            <person name="Tauch A."/>
            <person name="Schneider J."/>
            <person name="Szczepanowski R."/>
            <person name="Tilker A."/>
            <person name="Viehoever P."/>
            <person name="Gartemann K.-H."/>
            <person name="Arnold W."/>
            <person name="Blom J."/>
            <person name="Brinkrolf K."/>
            <person name="Brune I."/>
            <person name="Goetker S."/>
            <person name="Weisshaar B."/>
            <person name="Goesmann A."/>
            <person name="Droege M."/>
            <person name="Puehler A."/>
        </authorList>
    </citation>
    <scope>NUCLEOTIDE SEQUENCE [LARGE SCALE GENOMIC DNA]</scope>
    <source>
        <strain>DSM 44385 / JCM 11950 / CIP 105744 / CCUG 35717</strain>
    </source>
</reference>
<dbReference type="EMBL" id="CP001620">
    <property type="protein sequence ID" value="ACR18531.1"/>
    <property type="molecule type" value="Genomic_DNA"/>
</dbReference>
<dbReference type="RefSeq" id="WP_012732418.1">
    <property type="nucleotide sequence ID" value="NC_012704.1"/>
</dbReference>
<dbReference type="SMR" id="C4LL26"/>
<dbReference type="STRING" id="645127.ckrop_1811"/>
<dbReference type="GeneID" id="92726609"/>
<dbReference type="KEGG" id="ckp:ckrop_1811"/>
<dbReference type="eggNOG" id="COG0093">
    <property type="taxonomic scope" value="Bacteria"/>
</dbReference>
<dbReference type="HOGENOM" id="CLU_095071_2_1_11"/>
<dbReference type="OrthoDB" id="9806379at2"/>
<dbReference type="Proteomes" id="UP000001473">
    <property type="component" value="Chromosome"/>
</dbReference>
<dbReference type="GO" id="GO:0022625">
    <property type="term" value="C:cytosolic large ribosomal subunit"/>
    <property type="evidence" value="ECO:0007669"/>
    <property type="project" value="TreeGrafter"/>
</dbReference>
<dbReference type="GO" id="GO:0070180">
    <property type="term" value="F:large ribosomal subunit rRNA binding"/>
    <property type="evidence" value="ECO:0007669"/>
    <property type="project" value="TreeGrafter"/>
</dbReference>
<dbReference type="GO" id="GO:0003735">
    <property type="term" value="F:structural constituent of ribosome"/>
    <property type="evidence" value="ECO:0007669"/>
    <property type="project" value="InterPro"/>
</dbReference>
<dbReference type="GO" id="GO:0006412">
    <property type="term" value="P:translation"/>
    <property type="evidence" value="ECO:0007669"/>
    <property type="project" value="UniProtKB-UniRule"/>
</dbReference>
<dbReference type="CDD" id="cd00337">
    <property type="entry name" value="Ribosomal_uL14"/>
    <property type="match status" value="1"/>
</dbReference>
<dbReference type="FunFam" id="2.40.150.20:FF:000001">
    <property type="entry name" value="50S ribosomal protein L14"/>
    <property type="match status" value="1"/>
</dbReference>
<dbReference type="Gene3D" id="2.40.150.20">
    <property type="entry name" value="Ribosomal protein L14"/>
    <property type="match status" value="1"/>
</dbReference>
<dbReference type="HAMAP" id="MF_01367">
    <property type="entry name" value="Ribosomal_uL14"/>
    <property type="match status" value="1"/>
</dbReference>
<dbReference type="InterPro" id="IPR000218">
    <property type="entry name" value="Ribosomal_uL14"/>
</dbReference>
<dbReference type="InterPro" id="IPR005745">
    <property type="entry name" value="Ribosomal_uL14_bac-type"/>
</dbReference>
<dbReference type="InterPro" id="IPR019972">
    <property type="entry name" value="Ribosomal_uL14_CS"/>
</dbReference>
<dbReference type="InterPro" id="IPR036853">
    <property type="entry name" value="Ribosomal_uL14_sf"/>
</dbReference>
<dbReference type="NCBIfam" id="TIGR01067">
    <property type="entry name" value="rplN_bact"/>
    <property type="match status" value="1"/>
</dbReference>
<dbReference type="PANTHER" id="PTHR11761">
    <property type="entry name" value="50S/60S RIBOSOMAL PROTEIN L14/L23"/>
    <property type="match status" value="1"/>
</dbReference>
<dbReference type="PANTHER" id="PTHR11761:SF3">
    <property type="entry name" value="LARGE RIBOSOMAL SUBUNIT PROTEIN UL14M"/>
    <property type="match status" value="1"/>
</dbReference>
<dbReference type="Pfam" id="PF00238">
    <property type="entry name" value="Ribosomal_L14"/>
    <property type="match status" value="1"/>
</dbReference>
<dbReference type="SMART" id="SM01374">
    <property type="entry name" value="Ribosomal_L14"/>
    <property type="match status" value="1"/>
</dbReference>
<dbReference type="SUPFAM" id="SSF50193">
    <property type="entry name" value="Ribosomal protein L14"/>
    <property type="match status" value="1"/>
</dbReference>
<dbReference type="PROSITE" id="PS00049">
    <property type="entry name" value="RIBOSOMAL_L14"/>
    <property type="match status" value="1"/>
</dbReference>
<keyword id="KW-1185">Reference proteome</keyword>
<keyword id="KW-0687">Ribonucleoprotein</keyword>
<keyword id="KW-0689">Ribosomal protein</keyword>
<keyword id="KW-0694">RNA-binding</keyword>
<keyword id="KW-0699">rRNA-binding</keyword>
<evidence type="ECO:0000255" key="1">
    <source>
        <dbReference type="HAMAP-Rule" id="MF_01367"/>
    </source>
</evidence>
<evidence type="ECO:0000305" key="2"/>
<gene>
    <name evidence="1" type="primary">rplN</name>
    <name type="ordered locus">ckrop_1811</name>
</gene>
<sequence>MIQQESRLRVADNTGAREILCIRVLGGSTRRFAGIGDVIVATVKEATPGGNVKAGDIVKAVIVRAKKETRRPDGSYIRFDENAAVLIRNDNEPRGTRIFGPVARELRDKKFMKIVSLAPEVL</sequence>
<accession>C4LL26</accession>
<protein>
    <recommendedName>
        <fullName evidence="1">Large ribosomal subunit protein uL14</fullName>
    </recommendedName>
    <alternativeName>
        <fullName evidence="2">50S ribosomal protein L14</fullName>
    </alternativeName>
</protein>
<comment type="function">
    <text evidence="1">Binds to 23S rRNA. Forms part of two intersubunit bridges in the 70S ribosome.</text>
</comment>
<comment type="subunit">
    <text evidence="1">Part of the 50S ribosomal subunit. Forms a cluster with proteins L3 and L19. In the 70S ribosome, L14 and L19 interact and together make contacts with the 16S rRNA in bridges B5 and B8.</text>
</comment>
<comment type="similarity">
    <text evidence="1">Belongs to the universal ribosomal protein uL14 family.</text>
</comment>